<organismHost>
    <name type="scientific">Homo sapiens</name>
    <name type="common">Human</name>
    <dbReference type="NCBI Taxonomy" id="9606"/>
</organismHost>
<accession>P18039</accession>
<evidence type="ECO:0000250" key="1"/>
<evidence type="ECO:0000256" key="2">
    <source>
        <dbReference type="SAM" id="MobiDB-lite"/>
    </source>
</evidence>
<reference key="1">
    <citation type="journal article" date="1989" name="AIDS Res. Hum. Retroviruses">
        <title>Genomic divergence of HIV-2 from Ghana.</title>
        <authorList>
            <person name="Hasegawa A."/>
            <person name="Tsujimoto H."/>
            <person name="Maki N."/>
            <person name="Ishikawa K."/>
            <person name="Miura T."/>
            <person name="Fukasawa M."/>
            <person name="Miki K."/>
            <person name="Hayami M."/>
        </authorList>
    </citation>
    <scope>NUCLEOTIDE SEQUENCE [GENOMIC DNA]</scope>
</reference>
<proteinExistence type="inferred from homology"/>
<feature type="chain" id="PRO_0000085285" description="Protein Rev">
    <location>
        <begin position="1"/>
        <end position="103"/>
    </location>
</feature>
<feature type="region of interest" description="Homomultimerization" evidence="1">
    <location>
        <begin position="16"/>
        <end position="24"/>
    </location>
</feature>
<feature type="region of interest" description="Disordered" evidence="2">
    <location>
        <begin position="21"/>
        <end position="43"/>
    </location>
</feature>
<feature type="region of interest" description="Disordered" evidence="2">
    <location>
        <begin position="78"/>
        <end position="103"/>
    </location>
</feature>
<feature type="short sequence motif" description="Nuclear localization signal and RNA-binding (RRE)" evidence="1">
    <location>
        <begin position="35"/>
        <end position="49"/>
    </location>
</feature>
<feature type="short sequence motif" description="Nuclear export signal and binding to XPO1" evidence="1">
    <location>
        <begin position="71"/>
        <end position="82"/>
    </location>
</feature>
<feature type="compositionally biased region" description="Polar residues" evidence="2">
    <location>
        <begin position="92"/>
        <end position="103"/>
    </location>
</feature>
<sequence>MHEKADGEELQERLRLIRLLHQTNPYPHGPGTASQRRNRRRRQRRRWLRLVALADKLYTFPDPPTDSPLDRAIQDLQRLTIHELPDPPTDLPESNSNQGLAET</sequence>
<organism>
    <name type="scientific">Human immunodeficiency virus type 2 subtype A (isolate Ghana-1)</name>
    <name type="common">HIV-2</name>
    <dbReference type="NCBI Taxonomy" id="11717"/>
    <lineage>
        <taxon>Viruses</taxon>
        <taxon>Riboviria</taxon>
        <taxon>Pararnavirae</taxon>
        <taxon>Artverviricota</taxon>
        <taxon>Revtraviricetes</taxon>
        <taxon>Ortervirales</taxon>
        <taxon>Retroviridae</taxon>
        <taxon>Orthoretrovirinae</taxon>
        <taxon>Lentivirus</taxon>
        <taxon>Human immunodeficiency virus 2</taxon>
    </lineage>
</organism>
<name>REV_HV2G1</name>
<gene>
    <name type="primary">rev</name>
</gene>
<comment type="function">
    <text evidence="1">Escorts unspliced or incompletely spliced viral pre-mRNAs (late transcripts) out of the nucleus of infected cells. These pre-mRNAs carry a recognition sequence called Rev responsive element (RRE) located in the env gene, that is not present in fully spliced viral mRNAs (early transcripts). This function is essential since most viral proteins are translated from unspliced or partially spliced pre-mRNAs which cannot exit the nucleus by the pathway used by fully processed cellular mRNAs (By similarity).</text>
</comment>
<comment type="subunit">
    <text evidence="1">Homomultimer; when bound to the RRE. Multimeric assembly is essential for activity (By similarity).</text>
</comment>
<comment type="subcellular location">
    <subcellularLocation>
        <location>Host nucleus</location>
        <location>Host nucleolus</location>
    </subcellularLocation>
    <subcellularLocation>
        <location>Host cytoplasm</location>
    </subcellularLocation>
    <text evidence="1">The presence of both nuclear import and nuclear export signals leads to continuous shuttling between the nucleus and cytoplasm.</text>
</comment>
<comment type="domain">
    <text evidence="1">The RNA-binding motif binds to the RRE, a stem-and-loop structure present in incompletely spliced viral pre-mRNAs. This region also contains the NLS which mediates nuclear localization. These overlapping functions prevent Rev bound to RRE from undesirable return to the nucleus. When Rev binds the RRE, the NLS becomes masked while the NES remains accessible (By similarity).</text>
</comment>
<keyword id="KW-0014">AIDS</keyword>
<keyword id="KW-1035">Host cytoplasm</keyword>
<keyword id="KW-1048">Host nucleus</keyword>
<keyword id="KW-0509">mRNA transport</keyword>
<keyword id="KW-0694">RNA-binding</keyword>
<keyword id="KW-0813">Transport</keyword>
<dbReference type="EMBL" id="M30895">
    <property type="protein sequence ID" value="AAA43930.1"/>
    <property type="molecule type" value="Genomic_DNA"/>
</dbReference>
<dbReference type="PIR" id="JS0333">
    <property type="entry name" value="VKLJGG"/>
</dbReference>
<dbReference type="SMR" id="P18039"/>
<dbReference type="Proteomes" id="UP000007424">
    <property type="component" value="Segment"/>
</dbReference>
<dbReference type="GO" id="GO:0030430">
    <property type="term" value="C:host cell cytoplasm"/>
    <property type="evidence" value="ECO:0007669"/>
    <property type="project" value="UniProtKB-SubCell"/>
</dbReference>
<dbReference type="GO" id="GO:0044196">
    <property type="term" value="C:host cell nucleolus"/>
    <property type="evidence" value="ECO:0007669"/>
    <property type="project" value="UniProtKB-SubCell"/>
</dbReference>
<dbReference type="GO" id="GO:0003700">
    <property type="term" value="F:DNA-binding transcription factor activity"/>
    <property type="evidence" value="ECO:0007669"/>
    <property type="project" value="InterPro"/>
</dbReference>
<dbReference type="GO" id="GO:0003723">
    <property type="term" value="F:RNA binding"/>
    <property type="evidence" value="ECO:0007669"/>
    <property type="project" value="UniProtKB-KW"/>
</dbReference>
<dbReference type="GO" id="GO:0051028">
    <property type="term" value="P:mRNA transport"/>
    <property type="evidence" value="ECO:0007669"/>
    <property type="project" value="UniProtKB-KW"/>
</dbReference>
<dbReference type="Gene3D" id="6.10.140.630">
    <property type="match status" value="1"/>
</dbReference>
<dbReference type="InterPro" id="IPR000625">
    <property type="entry name" value="REV_protein"/>
</dbReference>
<dbReference type="Pfam" id="PF00424">
    <property type="entry name" value="REV"/>
    <property type="match status" value="1"/>
</dbReference>
<protein>
    <recommendedName>
        <fullName>Protein Rev</fullName>
    </recommendedName>
    <alternativeName>
        <fullName>Regulator of expression of viral proteins</fullName>
    </alternativeName>
</protein>